<feature type="chain" id="PRO_1000096113" description="Bifunctional purine biosynthesis protein PurH">
    <location>
        <begin position="1"/>
        <end position="529"/>
    </location>
</feature>
<feature type="domain" description="MGS-like" evidence="2">
    <location>
        <begin position="1"/>
        <end position="148"/>
    </location>
</feature>
<accession>B1JJL6</accession>
<proteinExistence type="inferred from homology"/>
<keyword id="KW-0378">Hydrolase</keyword>
<keyword id="KW-0511">Multifunctional enzyme</keyword>
<keyword id="KW-0658">Purine biosynthesis</keyword>
<keyword id="KW-0808">Transferase</keyword>
<gene>
    <name evidence="1" type="primary">purH</name>
    <name type="ordered locus">YPK_0357</name>
</gene>
<protein>
    <recommendedName>
        <fullName evidence="1">Bifunctional purine biosynthesis protein PurH</fullName>
    </recommendedName>
    <domain>
        <recommendedName>
            <fullName evidence="1">Phosphoribosylaminoimidazolecarboxamide formyltransferase</fullName>
            <ecNumber evidence="1">2.1.2.3</ecNumber>
        </recommendedName>
        <alternativeName>
            <fullName evidence="1">AICAR transformylase</fullName>
        </alternativeName>
    </domain>
    <domain>
        <recommendedName>
            <fullName evidence="1">IMP cyclohydrolase</fullName>
            <ecNumber evidence="1">3.5.4.10</ecNumber>
        </recommendedName>
        <alternativeName>
            <fullName evidence="1">ATIC</fullName>
        </alternativeName>
        <alternativeName>
            <fullName evidence="1">IMP synthase</fullName>
        </alternativeName>
        <alternativeName>
            <fullName evidence="1">Inosinicase</fullName>
        </alternativeName>
    </domain>
</protein>
<comment type="catalytic activity">
    <reaction evidence="1">
        <text>(6R)-10-formyltetrahydrofolate + 5-amino-1-(5-phospho-beta-D-ribosyl)imidazole-4-carboxamide = 5-formamido-1-(5-phospho-D-ribosyl)imidazole-4-carboxamide + (6S)-5,6,7,8-tetrahydrofolate</text>
        <dbReference type="Rhea" id="RHEA:22192"/>
        <dbReference type="ChEBI" id="CHEBI:57453"/>
        <dbReference type="ChEBI" id="CHEBI:58467"/>
        <dbReference type="ChEBI" id="CHEBI:58475"/>
        <dbReference type="ChEBI" id="CHEBI:195366"/>
        <dbReference type="EC" id="2.1.2.3"/>
    </reaction>
</comment>
<comment type="catalytic activity">
    <reaction evidence="1">
        <text>IMP + H2O = 5-formamido-1-(5-phospho-D-ribosyl)imidazole-4-carboxamide</text>
        <dbReference type="Rhea" id="RHEA:18445"/>
        <dbReference type="ChEBI" id="CHEBI:15377"/>
        <dbReference type="ChEBI" id="CHEBI:58053"/>
        <dbReference type="ChEBI" id="CHEBI:58467"/>
        <dbReference type="EC" id="3.5.4.10"/>
    </reaction>
</comment>
<comment type="pathway">
    <text evidence="1">Purine metabolism; IMP biosynthesis via de novo pathway; 5-formamido-1-(5-phospho-D-ribosyl)imidazole-4-carboxamide from 5-amino-1-(5-phospho-D-ribosyl)imidazole-4-carboxamide (10-formyl THF route): step 1/1.</text>
</comment>
<comment type="pathway">
    <text evidence="1">Purine metabolism; IMP biosynthesis via de novo pathway; IMP from 5-formamido-1-(5-phospho-D-ribosyl)imidazole-4-carboxamide: step 1/1.</text>
</comment>
<comment type="domain">
    <text evidence="1">The IMP cyclohydrolase activity resides in the N-terminal region.</text>
</comment>
<comment type="similarity">
    <text evidence="1">Belongs to the PurH family.</text>
</comment>
<evidence type="ECO:0000255" key="1">
    <source>
        <dbReference type="HAMAP-Rule" id="MF_00139"/>
    </source>
</evidence>
<evidence type="ECO:0000255" key="2">
    <source>
        <dbReference type="PROSITE-ProRule" id="PRU01202"/>
    </source>
</evidence>
<reference key="1">
    <citation type="submission" date="2008-02" db="EMBL/GenBank/DDBJ databases">
        <title>Complete sequence of Yersinia pseudotuberculosis YPIII.</title>
        <authorList>
            <consortium name="US DOE Joint Genome Institute"/>
            <person name="Copeland A."/>
            <person name="Lucas S."/>
            <person name="Lapidus A."/>
            <person name="Glavina del Rio T."/>
            <person name="Dalin E."/>
            <person name="Tice H."/>
            <person name="Bruce D."/>
            <person name="Goodwin L."/>
            <person name="Pitluck S."/>
            <person name="Munk A.C."/>
            <person name="Brettin T."/>
            <person name="Detter J.C."/>
            <person name="Han C."/>
            <person name="Tapia R."/>
            <person name="Schmutz J."/>
            <person name="Larimer F."/>
            <person name="Land M."/>
            <person name="Hauser L."/>
            <person name="Challacombe J.F."/>
            <person name="Green L."/>
            <person name="Lindler L.E."/>
            <person name="Nikolich M.P."/>
            <person name="Richardson P."/>
        </authorList>
    </citation>
    <scope>NUCLEOTIDE SEQUENCE [LARGE SCALE GENOMIC DNA]</scope>
    <source>
        <strain>YPIII</strain>
    </source>
</reference>
<organism>
    <name type="scientific">Yersinia pseudotuberculosis serotype O:3 (strain YPIII)</name>
    <dbReference type="NCBI Taxonomy" id="502800"/>
    <lineage>
        <taxon>Bacteria</taxon>
        <taxon>Pseudomonadati</taxon>
        <taxon>Pseudomonadota</taxon>
        <taxon>Gammaproteobacteria</taxon>
        <taxon>Enterobacterales</taxon>
        <taxon>Yersiniaceae</taxon>
        <taxon>Yersinia</taxon>
    </lineage>
</organism>
<name>PUR9_YERPY</name>
<dbReference type="EC" id="2.1.2.3" evidence="1"/>
<dbReference type="EC" id="3.5.4.10" evidence="1"/>
<dbReference type="EMBL" id="CP000950">
    <property type="protein sequence ID" value="ACA66667.1"/>
    <property type="molecule type" value="Genomic_DNA"/>
</dbReference>
<dbReference type="RefSeq" id="WP_011191559.1">
    <property type="nucleotide sequence ID" value="NZ_CP009792.1"/>
</dbReference>
<dbReference type="SMR" id="B1JJL6"/>
<dbReference type="GeneID" id="49787708"/>
<dbReference type="KEGG" id="ypy:YPK_0357"/>
<dbReference type="PATRIC" id="fig|502800.11.peg.961"/>
<dbReference type="UniPathway" id="UPA00074">
    <property type="reaction ID" value="UER00133"/>
</dbReference>
<dbReference type="UniPathway" id="UPA00074">
    <property type="reaction ID" value="UER00135"/>
</dbReference>
<dbReference type="GO" id="GO:0005829">
    <property type="term" value="C:cytosol"/>
    <property type="evidence" value="ECO:0007669"/>
    <property type="project" value="TreeGrafter"/>
</dbReference>
<dbReference type="GO" id="GO:0003937">
    <property type="term" value="F:IMP cyclohydrolase activity"/>
    <property type="evidence" value="ECO:0007669"/>
    <property type="project" value="UniProtKB-UniRule"/>
</dbReference>
<dbReference type="GO" id="GO:0004643">
    <property type="term" value="F:phosphoribosylaminoimidazolecarboxamide formyltransferase activity"/>
    <property type="evidence" value="ECO:0007669"/>
    <property type="project" value="UniProtKB-UniRule"/>
</dbReference>
<dbReference type="GO" id="GO:0006189">
    <property type="term" value="P:'de novo' IMP biosynthetic process"/>
    <property type="evidence" value="ECO:0007669"/>
    <property type="project" value="UniProtKB-UniRule"/>
</dbReference>
<dbReference type="CDD" id="cd01421">
    <property type="entry name" value="IMPCH"/>
    <property type="match status" value="1"/>
</dbReference>
<dbReference type="FunFam" id="3.40.140.20:FF:000001">
    <property type="entry name" value="Bifunctional purine biosynthesis protein PurH"/>
    <property type="match status" value="1"/>
</dbReference>
<dbReference type="FunFam" id="3.40.140.20:FF:000002">
    <property type="entry name" value="Bifunctional purine biosynthesis protein PurH"/>
    <property type="match status" value="1"/>
</dbReference>
<dbReference type="FunFam" id="3.40.50.1380:FF:000001">
    <property type="entry name" value="Bifunctional purine biosynthesis protein PurH"/>
    <property type="match status" value="1"/>
</dbReference>
<dbReference type="Gene3D" id="3.40.140.20">
    <property type="match status" value="2"/>
</dbReference>
<dbReference type="Gene3D" id="3.40.50.1380">
    <property type="entry name" value="Methylglyoxal synthase-like domain"/>
    <property type="match status" value="1"/>
</dbReference>
<dbReference type="HAMAP" id="MF_00139">
    <property type="entry name" value="PurH"/>
    <property type="match status" value="1"/>
</dbReference>
<dbReference type="InterPro" id="IPR024051">
    <property type="entry name" value="AICAR_Tfase_dup_dom_sf"/>
</dbReference>
<dbReference type="InterPro" id="IPR016193">
    <property type="entry name" value="Cytidine_deaminase-like"/>
</dbReference>
<dbReference type="InterPro" id="IPR011607">
    <property type="entry name" value="MGS-like_dom"/>
</dbReference>
<dbReference type="InterPro" id="IPR036914">
    <property type="entry name" value="MGS-like_dom_sf"/>
</dbReference>
<dbReference type="InterPro" id="IPR002695">
    <property type="entry name" value="PurH-like"/>
</dbReference>
<dbReference type="NCBIfam" id="NF002049">
    <property type="entry name" value="PRK00881.1"/>
    <property type="match status" value="1"/>
</dbReference>
<dbReference type="NCBIfam" id="TIGR00355">
    <property type="entry name" value="purH"/>
    <property type="match status" value="1"/>
</dbReference>
<dbReference type="PANTHER" id="PTHR11692:SF0">
    <property type="entry name" value="BIFUNCTIONAL PURINE BIOSYNTHESIS PROTEIN ATIC"/>
    <property type="match status" value="1"/>
</dbReference>
<dbReference type="PANTHER" id="PTHR11692">
    <property type="entry name" value="BIFUNCTIONAL PURINE BIOSYNTHESIS PROTEIN PURH"/>
    <property type="match status" value="1"/>
</dbReference>
<dbReference type="Pfam" id="PF01808">
    <property type="entry name" value="AICARFT_IMPCHas"/>
    <property type="match status" value="1"/>
</dbReference>
<dbReference type="Pfam" id="PF02142">
    <property type="entry name" value="MGS"/>
    <property type="match status" value="1"/>
</dbReference>
<dbReference type="PIRSF" id="PIRSF000414">
    <property type="entry name" value="AICARFT_IMPCHas"/>
    <property type="match status" value="1"/>
</dbReference>
<dbReference type="SMART" id="SM00798">
    <property type="entry name" value="AICARFT_IMPCHas"/>
    <property type="match status" value="1"/>
</dbReference>
<dbReference type="SMART" id="SM00851">
    <property type="entry name" value="MGS"/>
    <property type="match status" value="1"/>
</dbReference>
<dbReference type="SUPFAM" id="SSF53927">
    <property type="entry name" value="Cytidine deaminase-like"/>
    <property type="match status" value="1"/>
</dbReference>
<dbReference type="SUPFAM" id="SSF52335">
    <property type="entry name" value="Methylglyoxal synthase-like"/>
    <property type="match status" value="1"/>
</dbReference>
<dbReference type="PROSITE" id="PS51855">
    <property type="entry name" value="MGS"/>
    <property type="match status" value="1"/>
</dbReference>
<sequence length="529" mass="57151">MQQRRPIRRALLSVSDKAGIIEFAQALSQRGIELLSTGGTARLLADAGLPVTEVSDYTGFPEMMDGRVKTLHPKVHGGILGRRGQDDGIMAQHGIQPIDIVVVNLYPFAQTVARPDCSLEDAVENIDIGGPTMVRSAAKNHKDVAIVVKSSDYPAIITELDNNDGSLTYPTRFNLAIKAFEHTAAYDSMIANYFGTLVPPYHGDTEQPSGHFPRTLNLNYIKKQDMRYGENSHQQAAFYIEEDVKEASVATAQQLQGKALSYNNIADTDAALECVKEFSEPACVIVKHANPCGVAIGDSILAAYERAYQTDPTSAFGGIIAFNRELDAATANAIISRQFVEVIIAPTVSSDALALLAAKQNVRVLTCGQWQARSAGLDFKRVNGGLLVQERDLGMVTAADLRVVSKRQPTEQELRDALFCWKVAKFVKSNAIVYARDNMTIGIGAGQMSRVYSAKIAGIKAADEGLEVAGSAMASDAFFPFRDGIDAAAAVGITCVIQPGGSIRDDEVIAAADEHGIAMIFTDMRHFRH</sequence>